<feature type="chain" id="PRO_0000348715" description="tRNA-cytidine(32) 2-sulfurtransferase">
    <location>
        <begin position="1"/>
        <end position="311"/>
    </location>
</feature>
<feature type="short sequence motif" description="PP-loop motif" evidence="1">
    <location>
        <begin position="47"/>
        <end position="52"/>
    </location>
</feature>
<feature type="binding site" evidence="1">
    <location>
        <position position="122"/>
    </location>
    <ligand>
        <name>[4Fe-4S] cluster</name>
        <dbReference type="ChEBI" id="CHEBI:49883"/>
    </ligand>
</feature>
<feature type="binding site" evidence="1">
    <location>
        <position position="125"/>
    </location>
    <ligand>
        <name>[4Fe-4S] cluster</name>
        <dbReference type="ChEBI" id="CHEBI:49883"/>
    </ligand>
</feature>
<feature type="binding site" evidence="1">
    <location>
        <position position="213"/>
    </location>
    <ligand>
        <name>[4Fe-4S] cluster</name>
        <dbReference type="ChEBI" id="CHEBI:49883"/>
    </ligand>
</feature>
<dbReference type="EC" id="2.8.1.-" evidence="1"/>
<dbReference type="EMBL" id="CP000653">
    <property type="protein sequence ID" value="ABP60817.1"/>
    <property type="molecule type" value="Genomic_DNA"/>
</dbReference>
<dbReference type="RefSeq" id="WP_012017532.1">
    <property type="nucleotide sequence ID" value="NC_009436.1"/>
</dbReference>
<dbReference type="SMR" id="A4WAT7"/>
<dbReference type="STRING" id="399742.Ent638_2142"/>
<dbReference type="KEGG" id="ent:Ent638_2142"/>
<dbReference type="eggNOG" id="COG0037">
    <property type="taxonomic scope" value="Bacteria"/>
</dbReference>
<dbReference type="HOGENOM" id="CLU_026481_0_0_6"/>
<dbReference type="OrthoDB" id="9801054at2"/>
<dbReference type="Proteomes" id="UP000000230">
    <property type="component" value="Chromosome"/>
</dbReference>
<dbReference type="GO" id="GO:0005737">
    <property type="term" value="C:cytoplasm"/>
    <property type="evidence" value="ECO:0007669"/>
    <property type="project" value="UniProtKB-SubCell"/>
</dbReference>
<dbReference type="GO" id="GO:0051539">
    <property type="term" value="F:4 iron, 4 sulfur cluster binding"/>
    <property type="evidence" value="ECO:0007669"/>
    <property type="project" value="UniProtKB-UniRule"/>
</dbReference>
<dbReference type="GO" id="GO:0005524">
    <property type="term" value="F:ATP binding"/>
    <property type="evidence" value="ECO:0007669"/>
    <property type="project" value="UniProtKB-UniRule"/>
</dbReference>
<dbReference type="GO" id="GO:0000287">
    <property type="term" value="F:magnesium ion binding"/>
    <property type="evidence" value="ECO:0007669"/>
    <property type="project" value="UniProtKB-UniRule"/>
</dbReference>
<dbReference type="GO" id="GO:0016783">
    <property type="term" value="F:sulfurtransferase activity"/>
    <property type="evidence" value="ECO:0007669"/>
    <property type="project" value="UniProtKB-UniRule"/>
</dbReference>
<dbReference type="GO" id="GO:0000049">
    <property type="term" value="F:tRNA binding"/>
    <property type="evidence" value="ECO:0007669"/>
    <property type="project" value="UniProtKB-KW"/>
</dbReference>
<dbReference type="GO" id="GO:0034227">
    <property type="term" value="P:tRNA thio-modification"/>
    <property type="evidence" value="ECO:0007669"/>
    <property type="project" value="UniProtKB-UniRule"/>
</dbReference>
<dbReference type="CDD" id="cd24138">
    <property type="entry name" value="TtcA-like"/>
    <property type="match status" value="1"/>
</dbReference>
<dbReference type="FunFam" id="3.40.50.620:FF:000046">
    <property type="entry name" value="tRNA-cytidine(32) 2-sulfurtransferase"/>
    <property type="match status" value="1"/>
</dbReference>
<dbReference type="Gene3D" id="3.40.50.620">
    <property type="entry name" value="HUPs"/>
    <property type="match status" value="1"/>
</dbReference>
<dbReference type="HAMAP" id="MF_01850">
    <property type="entry name" value="TtcA"/>
    <property type="match status" value="1"/>
</dbReference>
<dbReference type="InterPro" id="IPR014729">
    <property type="entry name" value="Rossmann-like_a/b/a_fold"/>
</dbReference>
<dbReference type="InterPro" id="IPR011063">
    <property type="entry name" value="TilS/TtcA_N"/>
</dbReference>
<dbReference type="InterPro" id="IPR012089">
    <property type="entry name" value="tRNA_Cyd_32_2_STrfase"/>
</dbReference>
<dbReference type="InterPro" id="IPR035107">
    <property type="entry name" value="tRNA_thiolation_TtcA_Ctu1"/>
</dbReference>
<dbReference type="NCBIfam" id="NF007972">
    <property type="entry name" value="PRK10696.1"/>
    <property type="match status" value="1"/>
</dbReference>
<dbReference type="PANTHER" id="PTHR43686:SF1">
    <property type="entry name" value="AMINOTRAN_5 DOMAIN-CONTAINING PROTEIN"/>
    <property type="match status" value="1"/>
</dbReference>
<dbReference type="PANTHER" id="PTHR43686">
    <property type="entry name" value="SULFURTRANSFERASE-RELATED"/>
    <property type="match status" value="1"/>
</dbReference>
<dbReference type="Pfam" id="PF01171">
    <property type="entry name" value="ATP_bind_3"/>
    <property type="match status" value="1"/>
</dbReference>
<dbReference type="PIRSF" id="PIRSF004976">
    <property type="entry name" value="ATPase_YdaO"/>
    <property type="match status" value="1"/>
</dbReference>
<dbReference type="SUPFAM" id="SSF52402">
    <property type="entry name" value="Adenine nucleotide alpha hydrolases-like"/>
    <property type="match status" value="1"/>
</dbReference>
<accession>A4WAT7</accession>
<name>TTCA_ENT38</name>
<evidence type="ECO:0000255" key="1">
    <source>
        <dbReference type="HAMAP-Rule" id="MF_01850"/>
    </source>
</evidence>
<keyword id="KW-0004">4Fe-4S</keyword>
<keyword id="KW-0067">ATP-binding</keyword>
<keyword id="KW-0963">Cytoplasm</keyword>
<keyword id="KW-0408">Iron</keyword>
<keyword id="KW-0411">Iron-sulfur</keyword>
<keyword id="KW-0460">Magnesium</keyword>
<keyword id="KW-0479">Metal-binding</keyword>
<keyword id="KW-0547">Nucleotide-binding</keyword>
<keyword id="KW-0694">RNA-binding</keyword>
<keyword id="KW-0808">Transferase</keyword>
<keyword id="KW-0819">tRNA processing</keyword>
<keyword id="KW-0820">tRNA-binding</keyword>
<comment type="function">
    <text evidence="1">Catalyzes the ATP-dependent 2-thiolation of cytidine in position 32 of tRNA, to form 2-thiocytidine (s(2)C32). The sulfur atoms are provided by the cysteine/cysteine desulfurase (IscS) system.</text>
</comment>
<comment type="catalytic activity">
    <reaction evidence="1">
        <text>cytidine(32) in tRNA + S-sulfanyl-L-cysteinyl-[cysteine desulfurase] + AH2 + ATP = 2-thiocytidine(32) in tRNA + L-cysteinyl-[cysteine desulfurase] + A + AMP + diphosphate + H(+)</text>
        <dbReference type="Rhea" id="RHEA:57048"/>
        <dbReference type="Rhea" id="RHEA-COMP:10288"/>
        <dbReference type="Rhea" id="RHEA-COMP:12157"/>
        <dbReference type="Rhea" id="RHEA-COMP:12158"/>
        <dbReference type="Rhea" id="RHEA-COMP:14821"/>
        <dbReference type="ChEBI" id="CHEBI:13193"/>
        <dbReference type="ChEBI" id="CHEBI:15378"/>
        <dbReference type="ChEBI" id="CHEBI:17499"/>
        <dbReference type="ChEBI" id="CHEBI:29950"/>
        <dbReference type="ChEBI" id="CHEBI:30616"/>
        <dbReference type="ChEBI" id="CHEBI:33019"/>
        <dbReference type="ChEBI" id="CHEBI:61963"/>
        <dbReference type="ChEBI" id="CHEBI:82748"/>
        <dbReference type="ChEBI" id="CHEBI:141453"/>
        <dbReference type="ChEBI" id="CHEBI:456215"/>
    </reaction>
    <physiologicalReaction direction="left-to-right" evidence="1">
        <dbReference type="Rhea" id="RHEA:57049"/>
    </physiologicalReaction>
</comment>
<comment type="cofactor">
    <cofactor evidence="1">
        <name>Mg(2+)</name>
        <dbReference type="ChEBI" id="CHEBI:18420"/>
    </cofactor>
</comment>
<comment type="cofactor">
    <cofactor evidence="1">
        <name>[4Fe-4S] cluster</name>
        <dbReference type="ChEBI" id="CHEBI:49883"/>
    </cofactor>
    <text evidence="1">Binds 1 [4Fe-4S] cluster per subunit. The cluster is chelated by three Cys residues, the fourth Fe has a free coordination site that may bind a sulfur atom transferred from the persulfide of IscS.</text>
</comment>
<comment type="pathway">
    <text evidence="1">tRNA modification.</text>
</comment>
<comment type="subunit">
    <text evidence="1">Homodimer.</text>
</comment>
<comment type="subcellular location">
    <subcellularLocation>
        <location evidence="1">Cytoplasm</location>
    </subcellularLocation>
</comment>
<comment type="miscellaneous">
    <text evidence="1">The thiolation reaction likely consists of two steps: a first activation step by ATP to form an adenylated intermediate of the target base of tRNA, and a second nucleophilic substitution step of the sulfur (S) atom supplied by the hydrosulfide attached to the Fe-S cluster.</text>
</comment>
<comment type="similarity">
    <text evidence="1">Belongs to the TtcA family.</text>
</comment>
<protein>
    <recommendedName>
        <fullName evidence="1">tRNA-cytidine(32) 2-sulfurtransferase</fullName>
        <ecNumber evidence="1">2.8.1.-</ecNumber>
    </recommendedName>
    <alternativeName>
        <fullName evidence="1">Two-thiocytidine biosynthesis protein A</fullName>
    </alternativeName>
    <alternativeName>
        <fullName evidence="1">tRNA 2-thiocytidine biosynthesis protein TtcA</fullName>
    </alternativeName>
</protein>
<reference key="1">
    <citation type="journal article" date="2010" name="PLoS Genet.">
        <title>Genome sequence of the plant growth promoting endophytic bacterium Enterobacter sp. 638.</title>
        <authorList>
            <person name="Taghavi S."/>
            <person name="van der Lelie D."/>
            <person name="Hoffman A."/>
            <person name="Zhang Y.B."/>
            <person name="Walla M.D."/>
            <person name="Vangronsveld J."/>
            <person name="Newman L."/>
            <person name="Monchy S."/>
        </authorList>
    </citation>
    <scope>NUCLEOTIDE SEQUENCE [LARGE SCALE GENOMIC DNA]</scope>
    <source>
        <strain>638</strain>
    </source>
</reference>
<proteinExistence type="inferred from homology"/>
<organism>
    <name type="scientific">Enterobacter sp. (strain 638)</name>
    <dbReference type="NCBI Taxonomy" id="399742"/>
    <lineage>
        <taxon>Bacteria</taxon>
        <taxon>Pseudomonadati</taxon>
        <taxon>Pseudomonadota</taxon>
        <taxon>Gammaproteobacteria</taxon>
        <taxon>Enterobacterales</taxon>
        <taxon>Enterobacteriaceae</taxon>
        <taxon>Enterobacter</taxon>
    </lineage>
</organism>
<sequence>MQQNQEITKKEQYNLNKLQKRLRRNVGQAIADFNMIEEGDRIMVCLSGGKDSYTMLEILRNLQQSAPVKFSLVAVNLDQKQPGFPEHILPEYLEQQGVEYKIVEENTYGIVKDKIPEGKTTCSLCSRLRRGILYRTATELGATKIALGHHRDDILQTLFLNMFYGGKMKGMPPKLMSDDGKHIVIRPLAYCREKDIERFAQAREYPIIPCNLCGSQPNLQRQVIGDMLRDWDKRYPGRIETMFSAMQNVVPSHLSDVELFDFKGIQHGSEVVAGGDLAFDREDIPMQPAGWQPEEDDSQLDEMRLNIVEVK</sequence>
<gene>
    <name evidence="1" type="primary">ttcA</name>
    <name type="ordered locus">Ent638_2142</name>
</gene>